<reference key="1">
    <citation type="submission" date="2007-06" db="EMBL/GenBank/DDBJ databases">
        <authorList>
            <person name="Brinkac L.M."/>
            <person name="Daugherty S."/>
            <person name="Dodson R.J."/>
            <person name="Madupu R."/>
            <person name="Brown J.L."/>
            <person name="Bruce D."/>
            <person name="Detter C."/>
            <person name="Munk C."/>
            <person name="Smith L.A."/>
            <person name="Smith T.J."/>
            <person name="White O."/>
            <person name="Brettin T.S."/>
        </authorList>
    </citation>
    <scope>NUCLEOTIDE SEQUENCE [LARGE SCALE GENOMIC DNA]</scope>
    <source>
        <strain>Langeland / NCTC 10281 / Type F</strain>
    </source>
</reference>
<evidence type="ECO:0000255" key="1">
    <source>
        <dbReference type="HAMAP-Rule" id="MF_01310"/>
    </source>
</evidence>
<evidence type="ECO:0000256" key="2">
    <source>
        <dbReference type="SAM" id="MobiDB-lite"/>
    </source>
</evidence>
<evidence type="ECO:0000305" key="3"/>
<sequence length="132" mass="14138">MAAGMKGKRSRRRKERKNVEHGCAHIKSTFNNSIVTITDSVGNTLSWASAGGLGFRGSRKSTPFAAQMAAETAAKVAMEHGLKSIEVYVKGPGSGREAAIRSLQAAGLEVTLIKDVTPIPHNGCRPPKRRRV</sequence>
<keyword id="KW-0687">Ribonucleoprotein</keyword>
<keyword id="KW-0689">Ribosomal protein</keyword>
<keyword id="KW-0694">RNA-binding</keyword>
<keyword id="KW-0699">rRNA-binding</keyword>
<comment type="function">
    <text evidence="1">Located on the platform of the 30S subunit, it bridges several disparate RNA helices of the 16S rRNA. Forms part of the Shine-Dalgarno cleft in the 70S ribosome.</text>
</comment>
<comment type="subunit">
    <text evidence="1">Part of the 30S ribosomal subunit. Interacts with proteins S7 and S18. Binds to IF-3.</text>
</comment>
<comment type="similarity">
    <text evidence="1">Belongs to the universal ribosomal protein uS11 family.</text>
</comment>
<name>RS11_CLOBL</name>
<feature type="chain" id="PRO_0000323338" description="Small ribosomal subunit protein uS11">
    <location>
        <begin position="1"/>
        <end position="132"/>
    </location>
</feature>
<feature type="region of interest" description="Disordered" evidence="2">
    <location>
        <begin position="1"/>
        <end position="20"/>
    </location>
</feature>
<feature type="compositionally biased region" description="Basic residues" evidence="2">
    <location>
        <begin position="1"/>
        <end position="16"/>
    </location>
</feature>
<accession>A7GJ47</accession>
<gene>
    <name evidence="1" type="primary">rpsK</name>
    <name type="ordered locus">CLI_3636</name>
</gene>
<dbReference type="EMBL" id="CP000728">
    <property type="protein sequence ID" value="ABS40923.1"/>
    <property type="molecule type" value="Genomic_DNA"/>
</dbReference>
<dbReference type="RefSeq" id="WP_003357621.1">
    <property type="nucleotide sequence ID" value="NC_009699.1"/>
</dbReference>
<dbReference type="SMR" id="A7GJ47"/>
<dbReference type="KEGG" id="cbf:CLI_3636"/>
<dbReference type="HOGENOM" id="CLU_072439_5_0_9"/>
<dbReference type="Proteomes" id="UP000002410">
    <property type="component" value="Chromosome"/>
</dbReference>
<dbReference type="GO" id="GO:1990904">
    <property type="term" value="C:ribonucleoprotein complex"/>
    <property type="evidence" value="ECO:0007669"/>
    <property type="project" value="UniProtKB-KW"/>
</dbReference>
<dbReference type="GO" id="GO:0005840">
    <property type="term" value="C:ribosome"/>
    <property type="evidence" value="ECO:0007669"/>
    <property type="project" value="UniProtKB-KW"/>
</dbReference>
<dbReference type="GO" id="GO:0019843">
    <property type="term" value="F:rRNA binding"/>
    <property type="evidence" value="ECO:0007669"/>
    <property type="project" value="UniProtKB-UniRule"/>
</dbReference>
<dbReference type="GO" id="GO:0003735">
    <property type="term" value="F:structural constituent of ribosome"/>
    <property type="evidence" value="ECO:0007669"/>
    <property type="project" value="InterPro"/>
</dbReference>
<dbReference type="GO" id="GO:0006412">
    <property type="term" value="P:translation"/>
    <property type="evidence" value="ECO:0007669"/>
    <property type="project" value="UniProtKB-UniRule"/>
</dbReference>
<dbReference type="FunFam" id="3.30.420.80:FF:000001">
    <property type="entry name" value="30S ribosomal protein S11"/>
    <property type="match status" value="1"/>
</dbReference>
<dbReference type="Gene3D" id="3.30.420.80">
    <property type="entry name" value="Ribosomal protein S11"/>
    <property type="match status" value="1"/>
</dbReference>
<dbReference type="HAMAP" id="MF_01310">
    <property type="entry name" value="Ribosomal_uS11"/>
    <property type="match status" value="1"/>
</dbReference>
<dbReference type="InterPro" id="IPR001971">
    <property type="entry name" value="Ribosomal_uS11"/>
</dbReference>
<dbReference type="InterPro" id="IPR019981">
    <property type="entry name" value="Ribosomal_uS11_bac-type"/>
</dbReference>
<dbReference type="InterPro" id="IPR018102">
    <property type="entry name" value="Ribosomal_uS11_CS"/>
</dbReference>
<dbReference type="InterPro" id="IPR036967">
    <property type="entry name" value="Ribosomal_uS11_sf"/>
</dbReference>
<dbReference type="NCBIfam" id="NF003698">
    <property type="entry name" value="PRK05309.1"/>
    <property type="match status" value="1"/>
</dbReference>
<dbReference type="NCBIfam" id="TIGR03632">
    <property type="entry name" value="uS11_bact"/>
    <property type="match status" value="1"/>
</dbReference>
<dbReference type="PANTHER" id="PTHR11759">
    <property type="entry name" value="40S RIBOSOMAL PROTEIN S14/30S RIBOSOMAL PROTEIN S11"/>
    <property type="match status" value="1"/>
</dbReference>
<dbReference type="Pfam" id="PF00411">
    <property type="entry name" value="Ribosomal_S11"/>
    <property type="match status" value="1"/>
</dbReference>
<dbReference type="PIRSF" id="PIRSF002131">
    <property type="entry name" value="Ribosomal_S11"/>
    <property type="match status" value="1"/>
</dbReference>
<dbReference type="SUPFAM" id="SSF53137">
    <property type="entry name" value="Translational machinery components"/>
    <property type="match status" value="1"/>
</dbReference>
<dbReference type="PROSITE" id="PS00054">
    <property type="entry name" value="RIBOSOMAL_S11"/>
    <property type="match status" value="1"/>
</dbReference>
<organism>
    <name type="scientific">Clostridium botulinum (strain Langeland / NCTC 10281 / Type F)</name>
    <dbReference type="NCBI Taxonomy" id="441772"/>
    <lineage>
        <taxon>Bacteria</taxon>
        <taxon>Bacillati</taxon>
        <taxon>Bacillota</taxon>
        <taxon>Clostridia</taxon>
        <taxon>Eubacteriales</taxon>
        <taxon>Clostridiaceae</taxon>
        <taxon>Clostridium</taxon>
    </lineage>
</organism>
<proteinExistence type="inferred from homology"/>
<protein>
    <recommendedName>
        <fullName evidence="1">Small ribosomal subunit protein uS11</fullName>
    </recommendedName>
    <alternativeName>
        <fullName evidence="3">30S ribosomal protein S11</fullName>
    </alternativeName>
</protein>